<reference key="1">
    <citation type="submission" date="1996-06" db="EMBL/GenBank/DDBJ databases">
        <title>Sequence of mouse prosomal subunit iota.</title>
        <authorList>
            <person name="Thomson S.A."/>
            <person name="Fechheimer M."/>
        </authorList>
    </citation>
    <scope>NUCLEOTIDE SEQUENCE [MRNA]</scope>
    <source>
        <tissue>Carcinoma</tissue>
    </source>
</reference>
<reference key="2">
    <citation type="journal article" date="1999" name="Immunogenetics">
        <title>The complete primary structure of mouse 20S proteasomes.</title>
        <authorList>
            <person name="Elenich L.A."/>
            <person name="Nandi D."/>
            <person name="Kent E.A."/>
            <person name="McCluskey T.S."/>
            <person name="Cruz M."/>
            <person name="Iyer M.N."/>
            <person name="Woodward E.C."/>
            <person name="Conn C.W."/>
            <person name="Ochoa A.L."/>
            <person name="Ginsburg D.B."/>
            <person name="Monaco J.J."/>
        </authorList>
    </citation>
    <scope>NUCLEOTIDE SEQUENCE [MRNA]</scope>
    <source>
        <strain>B10.BR</strain>
    </source>
</reference>
<reference key="3">
    <citation type="journal article" date="2005" name="Science">
        <title>The transcriptional landscape of the mammalian genome.</title>
        <authorList>
            <person name="Carninci P."/>
            <person name="Kasukawa T."/>
            <person name="Katayama S."/>
            <person name="Gough J."/>
            <person name="Frith M.C."/>
            <person name="Maeda N."/>
            <person name="Oyama R."/>
            <person name="Ravasi T."/>
            <person name="Lenhard B."/>
            <person name="Wells C."/>
            <person name="Kodzius R."/>
            <person name="Shimokawa K."/>
            <person name="Bajic V.B."/>
            <person name="Brenner S.E."/>
            <person name="Batalov S."/>
            <person name="Forrest A.R."/>
            <person name="Zavolan M."/>
            <person name="Davis M.J."/>
            <person name="Wilming L.G."/>
            <person name="Aidinis V."/>
            <person name="Allen J.E."/>
            <person name="Ambesi-Impiombato A."/>
            <person name="Apweiler R."/>
            <person name="Aturaliya R.N."/>
            <person name="Bailey T.L."/>
            <person name="Bansal M."/>
            <person name="Baxter L."/>
            <person name="Beisel K.W."/>
            <person name="Bersano T."/>
            <person name="Bono H."/>
            <person name="Chalk A.M."/>
            <person name="Chiu K.P."/>
            <person name="Choudhary V."/>
            <person name="Christoffels A."/>
            <person name="Clutterbuck D.R."/>
            <person name="Crowe M.L."/>
            <person name="Dalla E."/>
            <person name="Dalrymple B.P."/>
            <person name="de Bono B."/>
            <person name="Della Gatta G."/>
            <person name="di Bernardo D."/>
            <person name="Down T."/>
            <person name="Engstrom P."/>
            <person name="Fagiolini M."/>
            <person name="Faulkner G."/>
            <person name="Fletcher C.F."/>
            <person name="Fukushima T."/>
            <person name="Furuno M."/>
            <person name="Futaki S."/>
            <person name="Gariboldi M."/>
            <person name="Georgii-Hemming P."/>
            <person name="Gingeras T.R."/>
            <person name="Gojobori T."/>
            <person name="Green R.E."/>
            <person name="Gustincich S."/>
            <person name="Harbers M."/>
            <person name="Hayashi Y."/>
            <person name="Hensch T.K."/>
            <person name="Hirokawa N."/>
            <person name="Hill D."/>
            <person name="Huminiecki L."/>
            <person name="Iacono M."/>
            <person name="Ikeo K."/>
            <person name="Iwama A."/>
            <person name="Ishikawa T."/>
            <person name="Jakt M."/>
            <person name="Kanapin A."/>
            <person name="Katoh M."/>
            <person name="Kawasawa Y."/>
            <person name="Kelso J."/>
            <person name="Kitamura H."/>
            <person name="Kitano H."/>
            <person name="Kollias G."/>
            <person name="Krishnan S.P."/>
            <person name="Kruger A."/>
            <person name="Kummerfeld S.K."/>
            <person name="Kurochkin I.V."/>
            <person name="Lareau L.F."/>
            <person name="Lazarevic D."/>
            <person name="Lipovich L."/>
            <person name="Liu J."/>
            <person name="Liuni S."/>
            <person name="McWilliam S."/>
            <person name="Madan Babu M."/>
            <person name="Madera M."/>
            <person name="Marchionni L."/>
            <person name="Matsuda H."/>
            <person name="Matsuzawa S."/>
            <person name="Miki H."/>
            <person name="Mignone F."/>
            <person name="Miyake S."/>
            <person name="Morris K."/>
            <person name="Mottagui-Tabar S."/>
            <person name="Mulder N."/>
            <person name="Nakano N."/>
            <person name="Nakauchi H."/>
            <person name="Ng P."/>
            <person name="Nilsson R."/>
            <person name="Nishiguchi S."/>
            <person name="Nishikawa S."/>
            <person name="Nori F."/>
            <person name="Ohara O."/>
            <person name="Okazaki Y."/>
            <person name="Orlando V."/>
            <person name="Pang K.C."/>
            <person name="Pavan W.J."/>
            <person name="Pavesi G."/>
            <person name="Pesole G."/>
            <person name="Petrovsky N."/>
            <person name="Piazza S."/>
            <person name="Reed J."/>
            <person name="Reid J.F."/>
            <person name="Ring B.Z."/>
            <person name="Ringwald M."/>
            <person name="Rost B."/>
            <person name="Ruan Y."/>
            <person name="Salzberg S.L."/>
            <person name="Sandelin A."/>
            <person name="Schneider C."/>
            <person name="Schoenbach C."/>
            <person name="Sekiguchi K."/>
            <person name="Semple C.A."/>
            <person name="Seno S."/>
            <person name="Sessa L."/>
            <person name="Sheng Y."/>
            <person name="Shibata Y."/>
            <person name="Shimada H."/>
            <person name="Shimada K."/>
            <person name="Silva D."/>
            <person name="Sinclair B."/>
            <person name="Sperling S."/>
            <person name="Stupka E."/>
            <person name="Sugiura K."/>
            <person name="Sultana R."/>
            <person name="Takenaka Y."/>
            <person name="Taki K."/>
            <person name="Tammoja K."/>
            <person name="Tan S.L."/>
            <person name="Tang S."/>
            <person name="Taylor M.S."/>
            <person name="Tegner J."/>
            <person name="Teichmann S.A."/>
            <person name="Ueda H.R."/>
            <person name="van Nimwegen E."/>
            <person name="Verardo R."/>
            <person name="Wei C.L."/>
            <person name="Yagi K."/>
            <person name="Yamanishi H."/>
            <person name="Zabarovsky E."/>
            <person name="Zhu S."/>
            <person name="Zimmer A."/>
            <person name="Hide W."/>
            <person name="Bult C."/>
            <person name="Grimmond S.M."/>
            <person name="Teasdale R.D."/>
            <person name="Liu E.T."/>
            <person name="Brusic V."/>
            <person name="Quackenbush J."/>
            <person name="Wahlestedt C."/>
            <person name="Mattick J.S."/>
            <person name="Hume D.A."/>
            <person name="Kai C."/>
            <person name="Sasaki D."/>
            <person name="Tomaru Y."/>
            <person name="Fukuda S."/>
            <person name="Kanamori-Katayama M."/>
            <person name="Suzuki M."/>
            <person name="Aoki J."/>
            <person name="Arakawa T."/>
            <person name="Iida J."/>
            <person name="Imamura K."/>
            <person name="Itoh M."/>
            <person name="Kato T."/>
            <person name="Kawaji H."/>
            <person name="Kawagashira N."/>
            <person name="Kawashima T."/>
            <person name="Kojima M."/>
            <person name="Kondo S."/>
            <person name="Konno H."/>
            <person name="Nakano K."/>
            <person name="Ninomiya N."/>
            <person name="Nishio T."/>
            <person name="Okada M."/>
            <person name="Plessy C."/>
            <person name="Shibata K."/>
            <person name="Shiraki T."/>
            <person name="Suzuki S."/>
            <person name="Tagami M."/>
            <person name="Waki K."/>
            <person name="Watahiki A."/>
            <person name="Okamura-Oho Y."/>
            <person name="Suzuki H."/>
            <person name="Kawai J."/>
            <person name="Hayashizaki Y."/>
        </authorList>
    </citation>
    <scope>NUCLEOTIDE SEQUENCE [LARGE SCALE MRNA]</scope>
    <source>
        <strain>C57BL/6J</strain>
        <strain>NOD</strain>
        <tissue>Bone marrow</tissue>
        <tissue>Thymus</tissue>
    </source>
</reference>
<reference key="4">
    <citation type="journal article" date="2004" name="Genome Res.">
        <title>The status, quality, and expansion of the NIH full-length cDNA project: the Mammalian Gene Collection (MGC).</title>
        <authorList>
            <consortium name="The MGC Project Team"/>
        </authorList>
    </citation>
    <scope>NUCLEOTIDE SEQUENCE [LARGE SCALE MRNA]</scope>
    <source>
        <strain>C57BL/6J</strain>
        <tissue>Eye</tissue>
    </source>
</reference>
<reference key="5">
    <citation type="submission" date="2009-01" db="UniProtKB">
        <authorList>
            <person name="Lubec G."/>
            <person name="Klug S."/>
            <person name="Yang J.W."/>
            <person name="Zigmond M."/>
            <person name="Sunyer B."/>
            <person name="Chen W.-Q."/>
        </authorList>
    </citation>
    <scope>PROTEIN SEQUENCE OF 60-71; 105-116; 118-132 AND 229-245</scope>
    <scope>IDENTIFICATION BY MASS SPECTROMETRY</scope>
    <source>
        <strain>OF1</strain>
        <tissue>Brain</tissue>
        <tissue>Hippocampus</tissue>
    </source>
</reference>
<reference key="6">
    <citation type="journal article" date="2006" name="Mol. Cell. Biol.">
        <title>Proteasome activator PA200 is required for normal spermatogenesis.</title>
        <authorList>
            <person name="Khor B."/>
            <person name="Bredemeyer A.L."/>
            <person name="Huang C.-Y."/>
            <person name="Turnbull I.R."/>
            <person name="Evans R."/>
            <person name="Maggi L.B. Jr."/>
            <person name="White J.M."/>
            <person name="Walker L.M."/>
            <person name="Carnes K."/>
            <person name="Hess R.A."/>
            <person name="Sleckman B.P."/>
        </authorList>
    </citation>
    <scope>FUNCTION</scope>
</reference>
<reference key="7">
    <citation type="journal article" date="2006" name="Proteomics">
        <title>The up-regulation of proteasome subunits and lysosomal proteases in hepatocellular carcinomas of the HBx gene knockin transgenic mice.</title>
        <authorList>
            <person name="Cui F."/>
            <person name="Wang Y."/>
            <person name="Wang J."/>
            <person name="Wei K."/>
            <person name="Hu J."/>
            <person name="Liu F."/>
            <person name="Wang H."/>
            <person name="Zhao X."/>
            <person name="Zhang X."/>
            <person name="Yang X."/>
        </authorList>
    </citation>
    <scope>INDUCTION</scope>
    <scope>IDENTIFICATION BY MASS SPECTROMETRY</scope>
</reference>
<reference key="8">
    <citation type="journal article" date="2006" name="Circ. Res.">
        <title>Mapping the murine cardiac 26S proteasome complexes.</title>
        <authorList>
            <person name="Gomes A.V."/>
            <person name="Zong C."/>
            <person name="Edmondson R.D."/>
            <person name="Li X."/>
            <person name="Stefani E."/>
            <person name="Zhang J."/>
            <person name="Jones R.C."/>
            <person name="Thyparambil S."/>
            <person name="Wang G.W."/>
            <person name="Qiao X."/>
            <person name="Bardag-Gorce F."/>
            <person name="Ping P."/>
        </authorList>
    </citation>
    <scope>IDENTIFICATION IN THE 20S PROTEASOME CORE COMPLEX</scope>
</reference>
<reference key="9">
    <citation type="journal article" date="2008" name="J. Proteome Res.">
        <title>Large-scale identification and evolution indexing of tyrosine phosphorylation sites from murine brain.</title>
        <authorList>
            <person name="Ballif B.A."/>
            <person name="Carey G.R."/>
            <person name="Sunyaev S.R."/>
            <person name="Gygi S.P."/>
        </authorList>
    </citation>
    <scope>PHOSPHORYLATION [LARGE SCALE ANALYSIS] AT TYR-159</scope>
    <scope>IDENTIFICATION BY MASS SPECTROMETRY [LARGE SCALE ANALYSIS]</scope>
    <source>
        <tissue>Brain</tissue>
    </source>
</reference>
<reference key="10">
    <citation type="journal article" date="2010" name="Cell">
        <title>A tissue-specific atlas of mouse protein phosphorylation and expression.</title>
        <authorList>
            <person name="Huttlin E.L."/>
            <person name="Jedrychowski M.P."/>
            <person name="Elias J.E."/>
            <person name="Goswami T."/>
            <person name="Rad R."/>
            <person name="Beausoleil S.A."/>
            <person name="Villen J."/>
            <person name="Haas W."/>
            <person name="Sowa M.E."/>
            <person name="Gygi S.P."/>
        </authorList>
    </citation>
    <scope>IDENTIFICATION BY MASS SPECTROMETRY [LARGE SCALE ANALYSIS]</scope>
    <source>
        <tissue>Brain</tissue>
        <tissue>Brown adipose tissue</tissue>
        <tissue>Heart</tissue>
        <tissue>Kidney</tissue>
        <tissue>Liver</tissue>
        <tissue>Lung</tissue>
        <tissue>Pancreas</tissue>
        <tissue>Spleen</tissue>
        <tissue>Testis</tissue>
    </source>
</reference>
<reference key="11">
    <citation type="journal article" date="2011" name="Retrovirology">
        <title>TRIM5alpha associates with proteasomal subunits in cells while in complex with HIV-1 virions.</title>
        <authorList>
            <person name="Lukic Z."/>
            <person name="Hausmann S."/>
            <person name="Sebastian S."/>
            <person name="Rucci J."/>
            <person name="Sastri J."/>
            <person name="Robia S.L."/>
            <person name="Luban J."/>
            <person name="Campbell E.M."/>
        </authorList>
    </citation>
    <scope>SUBCELLULAR LOCATION</scope>
</reference>
<reference key="12">
    <citation type="journal article" date="2012" name="Mol. Cell. Proteomics">
        <title>Mapping of O-GlcNAc sites of 20 S proteasome subunits and Hsp90 by a novel biotin-cystamine tag.</title>
        <authorList>
            <person name="Overath T."/>
            <person name="Kuckelkorn U."/>
            <person name="Henklein P."/>
            <person name="Strehl B."/>
            <person name="Bonar D."/>
            <person name="Kloss A."/>
            <person name="Siele D."/>
            <person name="Kloetzel P.M."/>
            <person name="Janek K."/>
        </authorList>
    </citation>
    <scope>GLYCOSYLATION AT SER-5</scope>
    <source>
        <tissue>Brain</tissue>
        <tissue>Spleen</tissue>
    </source>
</reference>
<reference key="13">
    <citation type="journal article" date="2013" name="Mol. Cell">
        <title>SIRT5-mediated lysine desuccinylation impacts diverse metabolic pathways.</title>
        <authorList>
            <person name="Park J."/>
            <person name="Chen Y."/>
            <person name="Tishkoff D.X."/>
            <person name="Peng C."/>
            <person name="Tan M."/>
            <person name="Dai L."/>
            <person name="Xie Z."/>
            <person name="Zhang Y."/>
            <person name="Zwaans B.M."/>
            <person name="Skinner M.E."/>
            <person name="Lombard D.B."/>
            <person name="Zhao Y."/>
        </authorList>
    </citation>
    <scope>ACETYLATION [LARGE SCALE ANALYSIS] AT LYS-104</scope>
    <scope>IDENTIFICATION BY MASS SPECTROMETRY [LARGE SCALE ANALYSIS]</scope>
    <source>
        <tissue>Embryonic fibroblast</tissue>
    </source>
</reference>
<reference key="14">
    <citation type="journal article" date="2012" name="Cell">
        <title>Immuno- and constitutive proteasome crystal structures reveal differences in substrate and inhibitor specificity.</title>
        <authorList>
            <person name="Huber E.M."/>
            <person name="Basler M."/>
            <person name="Schwab R."/>
            <person name="Heinemeyer W."/>
            <person name="Kirk C.J."/>
            <person name="Groettrup M."/>
            <person name="Groll M."/>
        </authorList>
    </citation>
    <scope>X-RAY CRYSTALLOGRAPHY (2.90 ANGSTROMS) OF 20S IMMUNOPROTEASOME</scope>
    <scope>SUBUNIT</scope>
    <scope>FUNCTION</scope>
    <scope>TISSUE SPECIFICITY</scope>
</reference>
<evidence type="ECO:0000250" key="1">
    <source>
        <dbReference type="UniProtKB" id="P60900"/>
    </source>
</evidence>
<evidence type="ECO:0000255" key="2">
    <source>
        <dbReference type="PROSITE-ProRule" id="PRU00808"/>
    </source>
</evidence>
<evidence type="ECO:0000269" key="3">
    <source>
    </source>
</evidence>
<evidence type="ECO:0000269" key="4">
    <source>
    </source>
</evidence>
<evidence type="ECO:0000269" key="5">
    <source>
    </source>
</evidence>
<evidence type="ECO:0000269" key="6">
    <source>
    </source>
</evidence>
<evidence type="ECO:0000269" key="7">
    <source>
    </source>
</evidence>
<evidence type="ECO:0000269" key="8">
    <source>
    </source>
</evidence>
<evidence type="ECO:0000305" key="9"/>
<evidence type="ECO:0007744" key="10">
    <source>
    </source>
</evidence>
<evidence type="ECO:0007744" key="11">
    <source>
    </source>
</evidence>
<evidence type="ECO:0007829" key="12">
    <source>
        <dbReference type="PDB" id="3UNB"/>
    </source>
</evidence>
<dbReference type="EMBL" id="U60288">
    <property type="protein sequence ID" value="AAF21459.1"/>
    <property type="molecule type" value="mRNA"/>
</dbReference>
<dbReference type="EMBL" id="AF060087">
    <property type="protein sequence ID" value="AAD50532.1"/>
    <property type="molecule type" value="mRNA"/>
</dbReference>
<dbReference type="EMBL" id="AK088143">
    <property type="protein sequence ID" value="BAC40169.1"/>
    <property type="molecule type" value="mRNA"/>
</dbReference>
<dbReference type="EMBL" id="AK152915">
    <property type="protein sequence ID" value="BAE31592.1"/>
    <property type="molecule type" value="mRNA"/>
</dbReference>
<dbReference type="EMBL" id="AK161662">
    <property type="protein sequence ID" value="BAE36518.1"/>
    <property type="molecule type" value="mRNA"/>
</dbReference>
<dbReference type="EMBL" id="BC086685">
    <property type="protein sequence ID" value="AAH86685.1"/>
    <property type="molecule type" value="mRNA"/>
</dbReference>
<dbReference type="CCDS" id="CCDS25917.1"/>
<dbReference type="RefSeq" id="NP_036098.1">
    <property type="nucleotide sequence ID" value="NM_011968.3"/>
</dbReference>
<dbReference type="PDB" id="3UNB">
    <property type="method" value="X-ray"/>
    <property type="resolution" value="2.90 A"/>
    <property type="chains" value="G/U/i/w=1-246"/>
</dbReference>
<dbReference type="PDB" id="3UNE">
    <property type="method" value="X-ray"/>
    <property type="resolution" value="3.20 A"/>
    <property type="chains" value="G/U/i/w=1-246"/>
</dbReference>
<dbReference type="PDB" id="3UNF">
    <property type="method" value="X-ray"/>
    <property type="resolution" value="2.90 A"/>
    <property type="chains" value="G/U=1-246"/>
</dbReference>
<dbReference type="PDB" id="3UNH">
    <property type="method" value="X-ray"/>
    <property type="resolution" value="3.20 A"/>
    <property type="chains" value="G/U=1-246"/>
</dbReference>
<dbReference type="PDB" id="8YPK">
    <property type="method" value="EM"/>
    <property type="resolution" value="2.70 A"/>
    <property type="chains" value="K/R=1-246"/>
</dbReference>
<dbReference type="PDB" id="8YVP">
    <property type="method" value="EM"/>
    <property type="resolution" value="2.50 A"/>
    <property type="chains" value="K/R=1-246"/>
</dbReference>
<dbReference type="PDBsum" id="3UNB"/>
<dbReference type="PDBsum" id="3UNE"/>
<dbReference type="PDBsum" id="3UNF"/>
<dbReference type="PDBsum" id="3UNH"/>
<dbReference type="PDBsum" id="8YPK"/>
<dbReference type="PDBsum" id="8YVP"/>
<dbReference type="EMDB" id="EMD-39482"/>
<dbReference type="EMDB" id="EMD-39612"/>
<dbReference type="SMR" id="Q9QUM9"/>
<dbReference type="BioGRID" id="204994">
    <property type="interactions" value="69"/>
</dbReference>
<dbReference type="CORUM" id="Q9QUM9"/>
<dbReference type="FunCoup" id="Q9QUM9">
    <property type="interactions" value="2299"/>
</dbReference>
<dbReference type="IntAct" id="Q9QUM9">
    <property type="interactions" value="5"/>
</dbReference>
<dbReference type="MINT" id="Q9QUM9"/>
<dbReference type="STRING" id="10090.ENSMUSP00000021412"/>
<dbReference type="MEROPS" id="T01.971"/>
<dbReference type="GlyCosmos" id="Q9QUM9">
    <property type="glycosylation" value="1 site, No reported glycans"/>
</dbReference>
<dbReference type="GlyGen" id="Q9QUM9">
    <property type="glycosylation" value="2 sites, 1 O-linked glycan (2 sites)"/>
</dbReference>
<dbReference type="iPTMnet" id="Q9QUM9"/>
<dbReference type="PhosphoSitePlus" id="Q9QUM9"/>
<dbReference type="SwissPalm" id="Q9QUM9"/>
<dbReference type="REPRODUCTION-2DPAGE" id="Q9QUM9"/>
<dbReference type="CPTAC" id="non-CPTAC-3868"/>
<dbReference type="jPOST" id="Q9QUM9"/>
<dbReference type="PaxDb" id="10090-ENSMUSP00000021412"/>
<dbReference type="PeptideAtlas" id="Q9QUM9"/>
<dbReference type="ProteomicsDB" id="291913"/>
<dbReference type="Pumba" id="Q9QUM9"/>
<dbReference type="TopDownProteomics" id="Q9QUM9"/>
<dbReference type="Antibodypedia" id="155">
    <property type="antibodies" value="514 antibodies from 34 providers"/>
</dbReference>
<dbReference type="DNASU" id="26443"/>
<dbReference type="Ensembl" id="ENSMUST00000021412.9">
    <property type="protein sequence ID" value="ENSMUSP00000021412.9"/>
    <property type="gene ID" value="ENSMUSG00000021024.15"/>
</dbReference>
<dbReference type="GeneID" id="26443"/>
<dbReference type="KEGG" id="mmu:26443"/>
<dbReference type="UCSC" id="uc007noq.2">
    <property type="organism name" value="mouse"/>
</dbReference>
<dbReference type="AGR" id="MGI:1347006"/>
<dbReference type="CTD" id="5687"/>
<dbReference type="MGI" id="MGI:1347006">
    <property type="gene designation" value="Psma6"/>
</dbReference>
<dbReference type="VEuPathDB" id="HostDB:ENSMUSG00000021024"/>
<dbReference type="eggNOG" id="KOG0182">
    <property type="taxonomic scope" value="Eukaryota"/>
</dbReference>
<dbReference type="GeneTree" id="ENSGT00550000074807"/>
<dbReference type="HOGENOM" id="CLU_035750_4_1_1"/>
<dbReference type="InParanoid" id="Q9QUM9"/>
<dbReference type="OMA" id="YGYDMPV"/>
<dbReference type="OrthoDB" id="5835702at2759"/>
<dbReference type="PhylomeDB" id="Q9QUM9"/>
<dbReference type="TreeFam" id="TF106210"/>
<dbReference type="Reactome" id="R-MMU-1169091">
    <property type="pathway name" value="Activation of NF-kappaB in B cells"/>
</dbReference>
<dbReference type="Reactome" id="R-MMU-1234176">
    <property type="pathway name" value="Oxygen-dependent proline hydroxylation of Hypoxia-inducible Factor Alpha"/>
</dbReference>
<dbReference type="Reactome" id="R-MMU-1236978">
    <property type="pathway name" value="Cross-presentation of soluble exogenous antigens (endosomes)"/>
</dbReference>
<dbReference type="Reactome" id="R-MMU-174084">
    <property type="pathway name" value="Autodegradation of Cdh1 by Cdh1:APC/C"/>
</dbReference>
<dbReference type="Reactome" id="R-MMU-174154">
    <property type="pathway name" value="APC/C:Cdc20 mediated degradation of Securin"/>
</dbReference>
<dbReference type="Reactome" id="R-MMU-174178">
    <property type="pathway name" value="APC/C:Cdh1 mediated degradation of Cdc20 and other APC/C:Cdh1 targeted proteins in late mitosis/early G1"/>
</dbReference>
<dbReference type="Reactome" id="R-MMU-174184">
    <property type="pathway name" value="Cdc20:Phospho-APC/C mediated degradation of Cyclin A"/>
</dbReference>
<dbReference type="Reactome" id="R-MMU-187577">
    <property type="pathway name" value="SCF(Skp2)-mediated degradation of p27/p21"/>
</dbReference>
<dbReference type="Reactome" id="R-MMU-195253">
    <property type="pathway name" value="Degradation of beta-catenin by the destruction complex"/>
</dbReference>
<dbReference type="Reactome" id="R-MMU-202424">
    <property type="pathway name" value="Downstream TCR signaling"/>
</dbReference>
<dbReference type="Reactome" id="R-MMU-2467813">
    <property type="pathway name" value="Separation of Sister Chromatids"/>
</dbReference>
<dbReference type="Reactome" id="R-MMU-2871837">
    <property type="pathway name" value="FCERI mediated NF-kB activation"/>
</dbReference>
<dbReference type="Reactome" id="R-MMU-349425">
    <property type="pathway name" value="Autodegradation of the E3 ubiquitin ligase COP1"/>
</dbReference>
<dbReference type="Reactome" id="R-MMU-350562">
    <property type="pathway name" value="Regulation of ornithine decarboxylase (ODC)"/>
</dbReference>
<dbReference type="Reactome" id="R-MMU-382556">
    <property type="pathway name" value="ABC-family proteins mediated transport"/>
</dbReference>
<dbReference type="Reactome" id="R-MMU-450408">
    <property type="pathway name" value="AUF1 (hnRNP D0) binds and destabilizes mRNA"/>
</dbReference>
<dbReference type="Reactome" id="R-MMU-4608870">
    <property type="pathway name" value="Asymmetric localization of PCP proteins"/>
</dbReference>
<dbReference type="Reactome" id="R-MMU-4641257">
    <property type="pathway name" value="Degradation of AXIN"/>
</dbReference>
<dbReference type="Reactome" id="R-MMU-4641258">
    <property type="pathway name" value="Degradation of DVL"/>
</dbReference>
<dbReference type="Reactome" id="R-MMU-5358346">
    <property type="pathway name" value="Hedgehog ligand biogenesis"/>
</dbReference>
<dbReference type="Reactome" id="R-MMU-5607761">
    <property type="pathway name" value="Dectin-1 mediated noncanonical NF-kB signaling"/>
</dbReference>
<dbReference type="Reactome" id="R-MMU-5607764">
    <property type="pathway name" value="CLEC7A (Dectin-1) signaling"/>
</dbReference>
<dbReference type="Reactome" id="R-MMU-5610780">
    <property type="pathway name" value="Degradation of GLI1 by the proteasome"/>
</dbReference>
<dbReference type="Reactome" id="R-MMU-5610785">
    <property type="pathway name" value="GLI3 is processed to GLI3R by the proteasome"/>
</dbReference>
<dbReference type="Reactome" id="R-MMU-5632684">
    <property type="pathway name" value="Hedgehog 'on' state"/>
</dbReference>
<dbReference type="Reactome" id="R-MMU-5658442">
    <property type="pathway name" value="Regulation of RAS by GAPs"/>
</dbReference>
<dbReference type="Reactome" id="R-MMU-5668541">
    <property type="pathway name" value="TNFR2 non-canonical NF-kB pathway"/>
</dbReference>
<dbReference type="Reactome" id="R-MMU-5676590">
    <property type="pathway name" value="NIK--&gt;noncanonical NF-kB signaling"/>
</dbReference>
<dbReference type="Reactome" id="R-MMU-5687128">
    <property type="pathway name" value="MAPK6/MAPK4 signaling"/>
</dbReference>
<dbReference type="Reactome" id="R-MMU-5689603">
    <property type="pathway name" value="UCH proteinases"/>
</dbReference>
<dbReference type="Reactome" id="R-MMU-5689880">
    <property type="pathway name" value="Ub-specific processing proteases"/>
</dbReference>
<dbReference type="Reactome" id="R-MMU-68867">
    <property type="pathway name" value="Assembly of the pre-replicative complex"/>
</dbReference>
<dbReference type="Reactome" id="R-MMU-68949">
    <property type="pathway name" value="Orc1 removal from chromatin"/>
</dbReference>
<dbReference type="Reactome" id="R-MMU-69017">
    <property type="pathway name" value="CDK-mediated phosphorylation and removal of Cdc6"/>
</dbReference>
<dbReference type="Reactome" id="R-MMU-69481">
    <property type="pathway name" value="G2/M Checkpoints"/>
</dbReference>
<dbReference type="Reactome" id="R-MMU-69601">
    <property type="pathway name" value="Ubiquitin Mediated Degradation of Phosphorylated Cdc25A"/>
</dbReference>
<dbReference type="Reactome" id="R-MMU-75815">
    <property type="pathway name" value="Ubiquitin-dependent degradation of Cyclin D"/>
</dbReference>
<dbReference type="Reactome" id="R-MMU-8852276">
    <property type="pathway name" value="The role of GTSE1 in G2/M progression after G2 checkpoint"/>
</dbReference>
<dbReference type="Reactome" id="R-MMU-8854050">
    <property type="pathway name" value="FBXL7 down-regulates AURKA during mitotic entry and in early mitosis"/>
</dbReference>
<dbReference type="Reactome" id="R-MMU-8939236">
    <property type="pathway name" value="RUNX1 regulates transcription of genes involved in differentiation of HSCs"/>
</dbReference>
<dbReference type="Reactome" id="R-MMU-8939902">
    <property type="pathway name" value="Regulation of RUNX2 expression and activity"/>
</dbReference>
<dbReference type="Reactome" id="R-MMU-8941858">
    <property type="pathway name" value="Regulation of RUNX3 expression and activity"/>
</dbReference>
<dbReference type="Reactome" id="R-MMU-8948751">
    <property type="pathway name" value="Regulation of PTEN stability and activity"/>
</dbReference>
<dbReference type="Reactome" id="R-MMU-8951664">
    <property type="pathway name" value="Neddylation"/>
</dbReference>
<dbReference type="Reactome" id="R-MMU-9020702">
    <property type="pathway name" value="Interleukin-1 signaling"/>
</dbReference>
<dbReference type="Reactome" id="R-MMU-9755511">
    <property type="pathway name" value="KEAP1-NFE2L2 pathway"/>
</dbReference>
<dbReference type="Reactome" id="R-MMU-9762114">
    <property type="pathway name" value="GSK3B and BTRC:CUL1-mediated-degradation of NFE2L2"/>
</dbReference>
<dbReference type="Reactome" id="R-MMU-983168">
    <property type="pathway name" value="Antigen processing: Ubiquitination &amp; Proteasome degradation"/>
</dbReference>
<dbReference type="Reactome" id="R-MMU-9907900">
    <property type="pathway name" value="Proteasome assembly"/>
</dbReference>
<dbReference type="BioGRID-ORCS" id="26443">
    <property type="hits" value="28 hits in 76 CRISPR screens"/>
</dbReference>
<dbReference type="ChiTaRS" id="Psma6">
    <property type="organism name" value="mouse"/>
</dbReference>
<dbReference type="EvolutionaryTrace" id="Q9QUM9"/>
<dbReference type="PRO" id="PR:Q9QUM9"/>
<dbReference type="Proteomes" id="UP000000589">
    <property type="component" value="Chromosome 12"/>
</dbReference>
<dbReference type="RNAct" id="Q9QUM9">
    <property type="molecule type" value="protein"/>
</dbReference>
<dbReference type="Bgee" id="ENSMUSG00000021024">
    <property type="expression patterns" value="Expressed in paneth cell and 271 other cell types or tissues"/>
</dbReference>
<dbReference type="ExpressionAtlas" id="Q9QUM9">
    <property type="expression patterns" value="baseline and differential"/>
</dbReference>
<dbReference type="GO" id="GO:0005929">
    <property type="term" value="C:cilium"/>
    <property type="evidence" value="ECO:0007669"/>
    <property type="project" value="Ensembl"/>
</dbReference>
<dbReference type="GO" id="GO:0005737">
    <property type="term" value="C:cytoplasm"/>
    <property type="evidence" value="ECO:0000314"/>
    <property type="project" value="BHF-UCL"/>
</dbReference>
<dbReference type="GO" id="GO:0005829">
    <property type="term" value="C:cytosol"/>
    <property type="evidence" value="ECO:0000304"/>
    <property type="project" value="Reactome"/>
</dbReference>
<dbReference type="GO" id="GO:0005739">
    <property type="term" value="C:mitochondrion"/>
    <property type="evidence" value="ECO:0007669"/>
    <property type="project" value="Ensembl"/>
</dbReference>
<dbReference type="GO" id="GO:0030016">
    <property type="term" value="C:myofibril"/>
    <property type="evidence" value="ECO:0000250"/>
    <property type="project" value="BHF-UCL"/>
</dbReference>
<dbReference type="GO" id="GO:0016363">
    <property type="term" value="C:nuclear matrix"/>
    <property type="evidence" value="ECO:0000314"/>
    <property type="project" value="BHF-UCL"/>
</dbReference>
<dbReference type="GO" id="GO:0005654">
    <property type="term" value="C:nucleoplasm"/>
    <property type="evidence" value="ECO:0000304"/>
    <property type="project" value="Reactome"/>
</dbReference>
<dbReference type="GO" id="GO:0000932">
    <property type="term" value="C:P-body"/>
    <property type="evidence" value="ECO:0000314"/>
    <property type="project" value="UniProtKB"/>
</dbReference>
<dbReference type="GO" id="GO:0005839">
    <property type="term" value="C:proteasome core complex"/>
    <property type="evidence" value="ECO:0000314"/>
    <property type="project" value="UniProtKB"/>
</dbReference>
<dbReference type="GO" id="GO:0019773">
    <property type="term" value="C:proteasome core complex, alpha-subunit complex"/>
    <property type="evidence" value="ECO:0000250"/>
    <property type="project" value="UniProtKB"/>
</dbReference>
<dbReference type="GO" id="GO:0005840">
    <property type="term" value="C:ribosome"/>
    <property type="evidence" value="ECO:0000250"/>
    <property type="project" value="BHF-UCL"/>
</dbReference>
<dbReference type="GO" id="GO:0030017">
    <property type="term" value="C:sarcomere"/>
    <property type="evidence" value="ECO:0000250"/>
    <property type="project" value="BHF-UCL"/>
</dbReference>
<dbReference type="GO" id="GO:0051059">
    <property type="term" value="F:NF-kappaB binding"/>
    <property type="evidence" value="ECO:0007669"/>
    <property type="project" value="Ensembl"/>
</dbReference>
<dbReference type="GO" id="GO:0003723">
    <property type="term" value="F:RNA binding"/>
    <property type="evidence" value="ECO:0000314"/>
    <property type="project" value="BHF-UCL"/>
</dbReference>
<dbReference type="GO" id="GO:0043123">
    <property type="term" value="P:positive regulation of canonical NF-kappaB signal transduction"/>
    <property type="evidence" value="ECO:0000250"/>
    <property type="project" value="BHF-UCL"/>
</dbReference>
<dbReference type="GO" id="GO:0051603">
    <property type="term" value="P:proteolysis involved in protein catabolic process"/>
    <property type="evidence" value="ECO:0000250"/>
    <property type="project" value="BHF-UCL"/>
</dbReference>
<dbReference type="GO" id="GO:0007519">
    <property type="term" value="P:skeletal muscle tissue development"/>
    <property type="evidence" value="ECO:0000303"/>
    <property type="project" value="BHF-UCL"/>
</dbReference>
<dbReference type="GO" id="GO:0006511">
    <property type="term" value="P:ubiquitin-dependent protein catabolic process"/>
    <property type="evidence" value="ECO:0007669"/>
    <property type="project" value="InterPro"/>
</dbReference>
<dbReference type="CDD" id="cd03754">
    <property type="entry name" value="proteasome_alpha_type_6"/>
    <property type="match status" value="1"/>
</dbReference>
<dbReference type="FunFam" id="3.60.20.10:FF:000020">
    <property type="entry name" value="Proteasome subunit alpha type"/>
    <property type="match status" value="1"/>
</dbReference>
<dbReference type="Gene3D" id="3.60.20.10">
    <property type="entry name" value="Glutamine Phosphoribosylpyrophosphate, subunit 1, domain 1"/>
    <property type="match status" value="1"/>
</dbReference>
<dbReference type="InterPro" id="IPR029055">
    <property type="entry name" value="Ntn_hydrolases_N"/>
</dbReference>
<dbReference type="InterPro" id="IPR050115">
    <property type="entry name" value="Proteasome_alpha"/>
</dbReference>
<dbReference type="InterPro" id="IPR023332">
    <property type="entry name" value="Proteasome_alpha-type"/>
</dbReference>
<dbReference type="InterPro" id="IPR000426">
    <property type="entry name" value="Proteasome_asu_N"/>
</dbReference>
<dbReference type="InterPro" id="IPR001353">
    <property type="entry name" value="Proteasome_sua/b"/>
</dbReference>
<dbReference type="InterPro" id="IPR034642">
    <property type="entry name" value="Proteasome_subunit_alpha6"/>
</dbReference>
<dbReference type="NCBIfam" id="NF003075">
    <property type="entry name" value="PRK03996.1"/>
    <property type="match status" value="1"/>
</dbReference>
<dbReference type="PANTHER" id="PTHR11599">
    <property type="entry name" value="PROTEASOME SUBUNIT ALPHA/BETA"/>
    <property type="match status" value="1"/>
</dbReference>
<dbReference type="Pfam" id="PF00227">
    <property type="entry name" value="Proteasome"/>
    <property type="match status" value="1"/>
</dbReference>
<dbReference type="Pfam" id="PF10584">
    <property type="entry name" value="Proteasome_A_N"/>
    <property type="match status" value="1"/>
</dbReference>
<dbReference type="SMART" id="SM00948">
    <property type="entry name" value="Proteasome_A_N"/>
    <property type="match status" value="1"/>
</dbReference>
<dbReference type="SUPFAM" id="SSF56235">
    <property type="entry name" value="N-terminal nucleophile aminohydrolases (Ntn hydrolases)"/>
    <property type="match status" value="1"/>
</dbReference>
<dbReference type="PROSITE" id="PS00388">
    <property type="entry name" value="PROTEASOME_ALPHA_1"/>
    <property type="match status" value="1"/>
</dbReference>
<dbReference type="PROSITE" id="PS51475">
    <property type="entry name" value="PROTEASOME_ALPHA_2"/>
    <property type="match status" value="1"/>
</dbReference>
<name>PSA6_MOUSE</name>
<sequence>MSRGSSAGFDRHITIFSPEGRLYQVEYAFKAINQGGLTSVAVRGKDCAVIVTQKKVPDKLLDSSTVTHLFKITESIGCVMTGMTADSRSQVQRARYEAANWKYKYGYEIPVDMLCKRIADISQVYTQNAEMRPLGCCMILIGIDEEQGPQVYKCDPAGYYCGFKATAAGVKQTESTSFLEKKVKKKFDWTFEQTVETAITCLSTVLSIDFKPSEIEVGVVTVENPKFRILTEAEIDAHLVALAERD</sequence>
<proteinExistence type="evidence at protein level"/>
<feature type="chain" id="PRO_0000124131" description="Proteasome subunit alpha type-6">
    <location>
        <begin position="1"/>
        <end position="246"/>
    </location>
</feature>
<feature type="modified residue" description="Phosphoserine" evidence="1">
    <location>
        <position position="17"/>
    </location>
</feature>
<feature type="modified residue" description="Phosphoserine" evidence="1">
    <location>
        <position position="63"/>
    </location>
</feature>
<feature type="modified residue" description="Phosphoserine" evidence="1">
    <location>
        <position position="64"/>
    </location>
</feature>
<feature type="modified residue" description="N6-acetyllysine" evidence="1">
    <location>
        <position position="102"/>
    </location>
</feature>
<feature type="modified residue" description="N6-acetyllysine" evidence="11">
    <location>
        <position position="104"/>
    </location>
</feature>
<feature type="modified residue" description="Phosphotyrosine" evidence="10">
    <location>
        <position position="159"/>
    </location>
</feature>
<feature type="glycosylation site" description="O-linked (GlcNAc) serine" evidence="8">
    <location>
        <position position="5"/>
    </location>
</feature>
<feature type="sequence conflict" description="In Ref. 3; BAE36518." evidence="9" ref="3">
    <original>P</original>
    <variation>T</variation>
    <location>
        <position position="133"/>
    </location>
</feature>
<feature type="turn" evidence="12">
    <location>
        <begin position="10"/>
        <end position="12"/>
    </location>
</feature>
<feature type="helix" evidence="12">
    <location>
        <begin position="23"/>
        <end position="32"/>
    </location>
</feature>
<feature type="helix" evidence="12">
    <location>
        <begin position="33"/>
        <end position="35"/>
    </location>
</feature>
<feature type="strand" evidence="12">
    <location>
        <begin position="38"/>
        <end position="43"/>
    </location>
</feature>
<feature type="strand" evidence="12">
    <location>
        <begin position="45"/>
        <end position="53"/>
    </location>
</feature>
<feature type="turn" evidence="12">
    <location>
        <begin position="63"/>
        <end position="65"/>
    </location>
</feature>
<feature type="strand" evidence="12">
    <location>
        <begin position="69"/>
        <end position="71"/>
    </location>
</feature>
<feature type="strand" evidence="12">
    <location>
        <begin position="73"/>
        <end position="82"/>
    </location>
</feature>
<feature type="helix" evidence="12">
    <location>
        <begin position="84"/>
        <end position="105"/>
    </location>
</feature>
<feature type="helix" evidence="12">
    <location>
        <begin position="111"/>
        <end position="127"/>
    </location>
</feature>
<feature type="strand" evidence="12">
    <location>
        <begin position="128"/>
        <end position="131"/>
    </location>
</feature>
<feature type="strand" evidence="12">
    <location>
        <begin position="135"/>
        <end position="144"/>
    </location>
</feature>
<feature type="turn" evidence="12">
    <location>
        <begin position="145"/>
        <end position="147"/>
    </location>
</feature>
<feature type="strand" evidence="12">
    <location>
        <begin position="148"/>
        <end position="154"/>
    </location>
</feature>
<feature type="strand" evidence="12">
    <location>
        <begin position="156"/>
        <end position="158"/>
    </location>
</feature>
<feature type="strand" evidence="12">
    <location>
        <begin position="160"/>
        <end position="169"/>
    </location>
</feature>
<feature type="helix" evidence="12">
    <location>
        <begin position="172"/>
        <end position="184"/>
    </location>
</feature>
<feature type="helix" evidence="12">
    <location>
        <begin position="191"/>
        <end position="206"/>
    </location>
</feature>
<feature type="turn" evidence="12">
    <location>
        <begin position="212"/>
        <end position="214"/>
    </location>
</feature>
<feature type="strand" evidence="12">
    <location>
        <begin position="215"/>
        <end position="223"/>
    </location>
</feature>
<feature type="helix" evidence="12">
    <location>
        <begin position="232"/>
        <end position="242"/>
    </location>
</feature>
<keyword id="KW-0002">3D-structure</keyword>
<keyword id="KW-0007">Acetylation</keyword>
<keyword id="KW-0963">Cytoplasm</keyword>
<keyword id="KW-0903">Direct protein sequencing</keyword>
<keyword id="KW-0325">Glycoprotein</keyword>
<keyword id="KW-0539">Nucleus</keyword>
<keyword id="KW-0597">Phosphoprotein</keyword>
<keyword id="KW-0647">Proteasome</keyword>
<keyword id="KW-1185">Reference proteome</keyword>
<protein>
    <recommendedName>
        <fullName>Proteasome subunit alpha type-6</fullName>
    </recommendedName>
    <alternativeName>
        <fullName>Macropain iota chain</fullName>
    </alternativeName>
    <alternativeName>
        <fullName>Multicatalytic endopeptidase complex iota chain</fullName>
    </alternativeName>
    <alternativeName>
        <fullName>Proteasome iota chain</fullName>
    </alternativeName>
    <alternativeName>
        <fullName>Proteasome subunit alpha-1</fullName>
        <shortName>alpha-1</shortName>
    </alternativeName>
</protein>
<gene>
    <name type="primary">Psma6</name>
</gene>
<organism>
    <name type="scientific">Mus musculus</name>
    <name type="common">Mouse</name>
    <dbReference type="NCBI Taxonomy" id="10090"/>
    <lineage>
        <taxon>Eukaryota</taxon>
        <taxon>Metazoa</taxon>
        <taxon>Chordata</taxon>
        <taxon>Craniata</taxon>
        <taxon>Vertebrata</taxon>
        <taxon>Euteleostomi</taxon>
        <taxon>Mammalia</taxon>
        <taxon>Eutheria</taxon>
        <taxon>Euarchontoglires</taxon>
        <taxon>Glires</taxon>
        <taxon>Rodentia</taxon>
        <taxon>Myomorpha</taxon>
        <taxon>Muroidea</taxon>
        <taxon>Muridae</taxon>
        <taxon>Murinae</taxon>
        <taxon>Mus</taxon>
        <taxon>Mus</taxon>
    </lineage>
</organism>
<accession>Q9QUM9</accession>
<accession>Q0VGS3</accession>
<accession>Q3TT07</accession>
<accession>Q3U6Y2</accession>
<comment type="function">
    <text evidence="4 7">Component of the 20S core proteasome complex involved in the proteolytic degradation of most intracellular proteins. This complex plays numerous essential roles within the cell by associating with different regulatory particles. Associated with two 19S regulatory particles, forms the 26S proteasome and thus participates in the ATP-dependent degradation of ubiquitinated proteins. The 26S proteasome plays a key role in the maintenance of protein homeostasis by removing misfolded or damaged proteins that could impair cellular functions, and by removing proteins whose functions are no longer required. Associated with the PA200 or PA28, the 20S proteasome mediates ubiquitin-independent protein degradation. This type of proteolysis is required in several pathways including spermatogenesis (20S-PA200 complex) or generation of a subset of MHC class I-presented antigenic peptides (20S-PA28 complex).</text>
</comment>
<comment type="subunit">
    <text evidence="1 5 7">The 26S proteasome consists of a 20S proteasome core and two 19S regulatory subunits. The 20S proteasome core is a barrel-shaped complex made of 28 subunits that are arranged in four stacked rings. The two outer rings are each formed by seven alpha subunits, and the two inner rings are formed by seven beta subunits. The proteolytic activity is exerted by three beta-subunits PSMB5, PSMB6 and PSMB7 (PubMed:16857966, PubMed:22341445). Interacts with ALKBH4 (By similarity).</text>
</comment>
<comment type="subcellular location">
    <subcellularLocation>
        <location evidence="6">Cytoplasm</location>
    </subcellularLocation>
    <subcellularLocation>
        <location evidence="6">Nucleus</location>
    </subcellularLocation>
    <text evidence="1 6">Translocated from the cytoplasm into the nucleus following interaction with AKIRIN2, which bridges the proteasome with the nuclear import receptor IPO9 (By similarity). Colocalizes with TRIM5 in cytoplasmic bodies (PubMed:22078707).</text>
</comment>
<comment type="tissue specificity">
    <text evidence="7">Detected in liver (at protein level).</text>
</comment>
<comment type="induction">
    <text evidence="3">Up-regulated in liver tumor tissues (at protein level).</text>
</comment>
<comment type="similarity">
    <text evidence="2">Belongs to the peptidase T1A family.</text>
</comment>